<name>UNG_RFVKA</name>
<keyword id="KW-0227">DNA damage</keyword>
<keyword id="KW-0234">DNA repair</keyword>
<keyword id="KW-0238">DNA-binding</keyword>
<keyword id="KW-0378">Hydrolase</keyword>
<keyword id="KW-1185">Reference proteome</keyword>
<proteinExistence type="evidence at protein level"/>
<feature type="chain" id="PRO_0000176178" description="Uracil-DNA glycosylase">
    <location>
        <begin position="1"/>
        <end position="218"/>
    </location>
</feature>
<feature type="active site" description="Proton acceptor" evidence="2">
    <location>
        <position position="68"/>
    </location>
</feature>
<reference key="1">
    <citation type="journal article" date="1993" name="Proc. Natl. Acad. Sci. U.S.A.">
        <title>Identification of a poxvirus gene encoding a uracil-DNA glycosylase.</title>
        <authorList>
            <person name="Upton C."/>
            <person name="Stuart D.T."/>
            <person name="McFadden G."/>
        </authorList>
    </citation>
    <scope>NUCLEOTIDE SEQUENCE [GENOMIC DNA]</scope>
    <scope>CHARACTERIZATION</scope>
    <scope>FUNCTION</scope>
</reference>
<reference key="2">
    <citation type="journal article" date="1992" name="Virus Res.">
        <title>Sequence and analysis of the BamHI 'D' fragment of Shope fibroma virus: comparison with similar regions of related poxviruses.</title>
        <authorList>
            <person name="Strayer D.S."/>
            <person name="Jerng H.H."/>
        </authorList>
    </citation>
    <scope>NUCLEOTIDE SEQUENCE [GENOMIC DNA]</scope>
</reference>
<reference key="3">
    <citation type="journal article" date="1991" name="Virology">
        <title>Sequence and analysis of a portion of the genomes of Shope fibroma virus and malignant rabbit fibroma virus that is important for viral replication in lymphocytes.</title>
        <authorList>
            <person name="Strayer D.S."/>
            <person name="Jerng H.H."/>
            <person name="O'Connor K."/>
        </authorList>
    </citation>
    <scope>NUCLEOTIDE SEQUENCE [GENOMIC DNA]</scope>
</reference>
<reference key="4">
    <citation type="journal article" date="1999" name="Virology">
        <title>The complete genome sequence of shope (Rabbit) fibroma virus.</title>
        <authorList>
            <person name="Willer D.O."/>
            <person name="McFadden G."/>
            <person name="Evans D.H."/>
        </authorList>
    </citation>
    <scope>NUCLEOTIDE SEQUENCE [LARGE SCALE GENOMIC DNA]</scope>
</reference>
<reference key="5">
    <citation type="journal article" date="1991" name="Virology">
        <title>Identification and DNA sequence of the large subunit of the capping enzyme from Shope fibroma virus.</title>
        <authorList>
            <person name="Upton C."/>
            <person name="Stuart D."/>
            <person name="McFadden G."/>
        </authorList>
    </citation>
    <scope>NUCLEOTIDE SEQUENCE [GENOMIC DNA] OF 1-10</scope>
</reference>
<evidence type="ECO:0000250" key="1"/>
<evidence type="ECO:0000255" key="2">
    <source>
        <dbReference type="PROSITE-ProRule" id="PRU10072"/>
    </source>
</evidence>
<evidence type="ECO:0000269" key="3">
    <source>
    </source>
</evidence>
<evidence type="ECO:0000305" key="4"/>
<organismHost>
    <name type="scientific">Oryctolagus cuniculus</name>
    <name type="common">Rabbit</name>
    <dbReference type="NCBI Taxonomy" id="9986"/>
</organismHost>
<gene>
    <name type="primary">UNG</name>
    <name type="ORF">D6R</name>
    <name type="ORF">s079R</name>
</gene>
<protein>
    <recommendedName>
        <fullName>Uracil-DNA glycosylase</fullName>
        <shortName>UDG</shortName>
        <ecNumber>3.2.2.27</ecNumber>
    </recommendedName>
</protein>
<organism>
    <name type="scientific">Rabbit fibroma virus (strain Kasza)</name>
    <name type="common">RFV</name>
    <name type="synonym">Shope fibroma virus (strain Kasza)</name>
    <dbReference type="NCBI Taxonomy" id="10272"/>
    <lineage>
        <taxon>Viruses</taxon>
        <taxon>Varidnaviria</taxon>
        <taxon>Bamfordvirae</taxon>
        <taxon>Nucleocytoviricota</taxon>
        <taxon>Pokkesviricetes</taxon>
        <taxon>Chitovirales</taxon>
        <taxon>Poxviridae</taxon>
        <taxon>Chordopoxvirinae</taxon>
        <taxon>Leporipoxvirus</taxon>
        <taxon>Rabbit fibroma virus</taxon>
    </lineage>
</organism>
<comment type="function">
    <text evidence="1 3">Excises uracil residues from the DNA which can arise as a result of misincorporation of dUMP residues by DNA polymerase or due to deamination of cytosine. Also part of a heterodimeric processivity factor which potentiates the DNA polymerase activity. Binds to DNA (By similarity).</text>
</comment>
<comment type="catalytic activity">
    <reaction>
        <text>Hydrolyzes single-stranded DNA or mismatched double-stranded DNA and polynucleotides, releasing free uracil.</text>
        <dbReference type="EC" id="3.2.2.27"/>
    </reaction>
</comment>
<comment type="subunit">
    <text evidence="1">Homodimer. Interacts with protein A20. Component of the Uracil-DNA glycosylase(UDG)-A20-polymerase complex; A20 and UDG form a heterodimeric processivity factor that associates with E9 to form the processive polymerase holoenzyme (By similarity).</text>
</comment>
<comment type="similarity">
    <text evidence="4">Belongs to the uracil-DNA glycosylase (UDG) superfamily. UNG family.</text>
</comment>
<dbReference type="EC" id="3.2.2.27"/>
<dbReference type="EMBL" id="L01417">
    <property type="protein sequence ID" value="AAA47229.1"/>
    <property type="molecule type" value="Genomic_DNA"/>
</dbReference>
<dbReference type="EMBL" id="AF170722">
    <property type="protein sequence ID" value="AAF17961.1"/>
    <property type="molecule type" value="Genomic_DNA"/>
</dbReference>
<dbReference type="RefSeq" id="NP_051968.1">
    <property type="nucleotide sequence ID" value="NC_001266.1"/>
</dbReference>
<dbReference type="SMR" id="P32941"/>
<dbReference type="KEGG" id="vg:1486922"/>
<dbReference type="Proteomes" id="UP000000868">
    <property type="component" value="Segment"/>
</dbReference>
<dbReference type="GO" id="GO:0003677">
    <property type="term" value="F:DNA binding"/>
    <property type="evidence" value="ECO:0007669"/>
    <property type="project" value="UniProtKB-KW"/>
</dbReference>
<dbReference type="GO" id="GO:0004844">
    <property type="term" value="F:uracil DNA N-glycosylase activity"/>
    <property type="evidence" value="ECO:0007669"/>
    <property type="project" value="UniProtKB-EC"/>
</dbReference>
<dbReference type="GO" id="GO:0006281">
    <property type="term" value="P:DNA repair"/>
    <property type="evidence" value="ECO:0007669"/>
    <property type="project" value="UniProtKB-KW"/>
</dbReference>
<dbReference type="Gene3D" id="3.40.470.10">
    <property type="entry name" value="Uracil-DNA glycosylase-like domain"/>
    <property type="match status" value="1"/>
</dbReference>
<dbReference type="InterPro" id="IPR018085">
    <property type="entry name" value="Ura-DNA_Glyclase_AS"/>
</dbReference>
<dbReference type="InterPro" id="IPR036895">
    <property type="entry name" value="Uracil-DNA_glycosylase-like_sf"/>
</dbReference>
<dbReference type="SUPFAM" id="SSF52141">
    <property type="entry name" value="Uracil-DNA glycosylase-like"/>
    <property type="match status" value="1"/>
</dbReference>
<dbReference type="PROSITE" id="PS00130">
    <property type="entry name" value="U_DNA_GLYCOSYLASE"/>
    <property type="match status" value="1"/>
</dbReference>
<sequence>MRRVFLSHEPYVIEYHEDWENIITRLVDMYNEVAEWILKDDTSPTPDKFFKQLSVSLKDKRVCVCGIDPYPRDATGVPFESHNFTKKTIKYIAETVSNITGVRYYKGYNLNNVEGVFPWNYYLSCKIGETKSHALHWKRISKLLLQHITKYVNVLYCLGKTDFANIRSILETPVTTVIGYHPAAREKQFEKDKGFEIVNVLLEINDKPSIRWEQGFSY</sequence>
<accession>P32941</accession>
<accession>Q77PB8</accession>